<dbReference type="EMBL" id="CR954247">
    <property type="protein sequence ID" value="CAI89396.1"/>
    <property type="molecule type" value="Genomic_DNA"/>
</dbReference>
<dbReference type="SMR" id="Q3IC08"/>
<dbReference type="STRING" id="326442.PSHAb0357"/>
<dbReference type="KEGG" id="pha:PSHAb0357"/>
<dbReference type="PATRIC" id="fig|326442.8.peg.3263"/>
<dbReference type="eggNOG" id="COG0443">
    <property type="taxonomic scope" value="Bacteria"/>
</dbReference>
<dbReference type="HOGENOM" id="CLU_005965_2_1_6"/>
<dbReference type="BioCyc" id="PHAL326442:PSHA_RS16560-MONOMER"/>
<dbReference type="Proteomes" id="UP000006843">
    <property type="component" value="Chromosome II"/>
</dbReference>
<dbReference type="GO" id="GO:0005524">
    <property type="term" value="F:ATP binding"/>
    <property type="evidence" value="ECO:0007669"/>
    <property type="project" value="UniProtKB-UniRule"/>
</dbReference>
<dbReference type="GO" id="GO:0140662">
    <property type="term" value="F:ATP-dependent protein folding chaperone"/>
    <property type="evidence" value="ECO:0007669"/>
    <property type="project" value="InterPro"/>
</dbReference>
<dbReference type="GO" id="GO:0051082">
    <property type="term" value="F:unfolded protein binding"/>
    <property type="evidence" value="ECO:0007669"/>
    <property type="project" value="InterPro"/>
</dbReference>
<dbReference type="CDD" id="cd10234">
    <property type="entry name" value="ASKHA_NBD_HSP70_DnaK-like"/>
    <property type="match status" value="1"/>
</dbReference>
<dbReference type="FunFam" id="2.60.34.10:FF:000014">
    <property type="entry name" value="Chaperone protein DnaK HSP70"/>
    <property type="match status" value="1"/>
</dbReference>
<dbReference type="FunFam" id="3.30.30.30:FF:000003">
    <property type="entry name" value="Heat shock protein 9"/>
    <property type="match status" value="1"/>
</dbReference>
<dbReference type="FunFam" id="1.20.1270.10:FF:000001">
    <property type="entry name" value="Molecular chaperone DnaK"/>
    <property type="match status" value="1"/>
</dbReference>
<dbReference type="FunFam" id="3.30.420.40:FF:000004">
    <property type="entry name" value="Molecular chaperone DnaK"/>
    <property type="match status" value="1"/>
</dbReference>
<dbReference type="FunFam" id="3.90.640.10:FF:000003">
    <property type="entry name" value="Molecular chaperone DnaK"/>
    <property type="match status" value="1"/>
</dbReference>
<dbReference type="Gene3D" id="1.20.1270.10">
    <property type="match status" value="1"/>
</dbReference>
<dbReference type="Gene3D" id="3.30.420.40">
    <property type="match status" value="2"/>
</dbReference>
<dbReference type="Gene3D" id="3.90.640.10">
    <property type="entry name" value="Actin, Chain A, domain 4"/>
    <property type="match status" value="1"/>
</dbReference>
<dbReference type="Gene3D" id="2.60.34.10">
    <property type="entry name" value="Substrate Binding Domain Of DNAk, Chain A, domain 1"/>
    <property type="match status" value="1"/>
</dbReference>
<dbReference type="HAMAP" id="MF_00332">
    <property type="entry name" value="DnaK"/>
    <property type="match status" value="1"/>
</dbReference>
<dbReference type="InterPro" id="IPR043129">
    <property type="entry name" value="ATPase_NBD"/>
</dbReference>
<dbReference type="InterPro" id="IPR012725">
    <property type="entry name" value="Chaperone_DnaK"/>
</dbReference>
<dbReference type="InterPro" id="IPR018181">
    <property type="entry name" value="Heat_shock_70_CS"/>
</dbReference>
<dbReference type="InterPro" id="IPR029048">
    <property type="entry name" value="HSP70_C_sf"/>
</dbReference>
<dbReference type="InterPro" id="IPR029047">
    <property type="entry name" value="HSP70_peptide-bd_sf"/>
</dbReference>
<dbReference type="InterPro" id="IPR013126">
    <property type="entry name" value="Hsp_70_fam"/>
</dbReference>
<dbReference type="NCBIfam" id="NF001413">
    <property type="entry name" value="PRK00290.1"/>
    <property type="match status" value="1"/>
</dbReference>
<dbReference type="NCBIfam" id="NF003520">
    <property type="entry name" value="PRK05183.1"/>
    <property type="match status" value="1"/>
</dbReference>
<dbReference type="NCBIfam" id="TIGR02350">
    <property type="entry name" value="prok_dnaK"/>
    <property type="match status" value="1"/>
</dbReference>
<dbReference type="PANTHER" id="PTHR19375">
    <property type="entry name" value="HEAT SHOCK PROTEIN 70KDA"/>
    <property type="match status" value="1"/>
</dbReference>
<dbReference type="Pfam" id="PF00012">
    <property type="entry name" value="HSP70"/>
    <property type="match status" value="1"/>
</dbReference>
<dbReference type="PRINTS" id="PR00301">
    <property type="entry name" value="HEATSHOCK70"/>
</dbReference>
<dbReference type="SUPFAM" id="SSF53067">
    <property type="entry name" value="Actin-like ATPase domain"/>
    <property type="match status" value="2"/>
</dbReference>
<dbReference type="SUPFAM" id="SSF100934">
    <property type="entry name" value="Heat shock protein 70kD (HSP70), C-terminal subdomain"/>
    <property type="match status" value="1"/>
</dbReference>
<dbReference type="SUPFAM" id="SSF100920">
    <property type="entry name" value="Heat shock protein 70kD (HSP70), peptide-binding domain"/>
    <property type="match status" value="1"/>
</dbReference>
<dbReference type="PROSITE" id="PS00297">
    <property type="entry name" value="HSP70_1"/>
    <property type="match status" value="1"/>
</dbReference>
<dbReference type="PROSITE" id="PS00329">
    <property type="entry name" value="HSP70_2"/>
    <property type="match status" value="1"/>
</dbReference>
<dbReference type="PROSITE" id="PS01036">
    <property type="entry name" value="HSP70_3"/>
    <property type="match status" value="1"/>
</dbReference>
<proteinExistence type="inferred from homology"/>
<gene>
    <name evidence="1" type="primary">dnaK</name>
    <name type="ordered locus">PSHAb0357</name>
</gene>
<comment type="function">
    <text evidence="1">Acts as a chaperone.</text>
</comment>
<comment type="induction">
    <text evidence="1">By stress conditions e.g. heat shock.</text>
</comment>
<comment type="similarity">
    <text evidence="1">Belongs to the heat shock protein 70 family.</text>
</comment>
<accession>Q3IC08</accession>
<protein>
    <recommendedName>
        <fullName evidence="1">Chaperone protein DnaK</fullName>
    </recommendedName>
    <alternativeName>
        <fullName evidence="1">HSP70</fullName>
    </alternativeName>
    <alternativeName>
        <fullName evidence="1">Heat shock 70 kDa protein</fullName>
    </alternativeName>
    <alternativeName>
        <fullName evidence="1">Heat shock protein 70</fullName>
    </alternativeName>
</protein>
<feature type="chain" id="PRO_0000225995" description="Chaperone protein DnaK">
    <location>
        <begin position="1"/>
        <end position="638"/>
    </location>
</feature>
<feature type="region of interest" description="Disordered" evidence="2">
    <location>
        <begin position="602"/>
        <end position="638"/>
    </location>
</feature>
<feature type="compositionally biased region" description="Polar residues" evidence="2">
    <location>
        <begin position="605"/>
        <end position="620"/>
    </location>
</feature>
<feature type="compositionally biased region" description="Acidic residues" evidence="2">
    <location>
        <begin position="625"/>
        <end position="638"/>
    </location>
</feature>
<feature type="modified residue" description="Phosphothreonine; by autocatalysis" evidence="1">
    <location>
        <position position="199"/>
    </location>
</feature>
<organism>
    <name type="scientific">Pseudoalteromonas translucida (strain TAC 125)</name>
    <dbReference type="NCBI Taxonomy" id="326442"/>
    <lineage>
        <taxon>Bacteria</taxon>
        <taxon>Pseudomonadati</taxon>
        <taxon>Pseudomonadota</taxon>
        <taxon>Gammaproteobacteria</taxon>
        <taxon>Alteromonadales</taxon>
        <taxon>Pseudoalteromonadaceae</taxon>
        <taxon>Pseudoalteromonas</taxon>
    </lineage>
</organism>
<reference key="1">
    <citation type="journal article" date="2005" name="Genome Res.">
        <title>Coping with cold: the genome of the versatile marine Antarctica bacterium Pseudoalteromonas haloplanktis TAC125.</title>
        <authorList>
            <person name="Medigue C."/>
            <person name="Krin E."/>
            <person name="Pascal G."/>
            <person name="Barbe V."/>
            <person name="Bernsel A."/>
            <person name="Bertin P.N."/>
            <person name="Cheung F."/>
            <person name="Cruveiller S."/>
            <person name="D'Amico S."/>
            <person name="Duilio A."/>
            <person name="Fang G."/>
            <person name="Feller G."/>
            <person name="Ho C."/>
            <person name="Mangenot S."/>
            <person name="Marino G."/>
            <person name="Nilsson J."/>
            <person name="Parrilli E."/>
            <person name="Rocha E.P.C."/>
            <person name="Rouy Z."/>
            <person name="Sekowska A."/>
            <person name="Tutino M.L."/>
            <person name="Vallenet D."/>
            <person name="von Heijne G."/>
            <person name="Danchin A."/>
        </authorList>
    </citation>
    <scope>NUCLEOTIDE SEQUENCE [LARGE SCALE GENOMIC DNA]</scope>
    <source>
        <strain>TAC 125</strain>
    </source>
</reference>
<keyword id="KW-0067">ATP-binding</keyword>
<keyword id="KW-0143">Chaperone</keyword>
<keyword id="KW-0547">Nucleotide-binding</keyword>
<keyword id="KW-0597">Phosphoprotein</keyword>
<keyword id="KW-1185">Reference proteome</keyword>
<keyword id="KW-0346">Stress response</keyword>
<evidence type="ECO:0000255" key="1">
    <source>
        <dbReference type="HAMAP-Rule" id="MF_00332"/>
    </source>
</evidence>
<evidence type="ECO:0000256" key="2">
    <source>
        <dbReference type="SAM" id="MobiDB-lite"/>
    </source>
</evidence>
<sequence length="638" mass="68951">MGRIIGIDLGTTNSCVAVLDGGKARVIENAEGDRTTPSVIAYTQDGETLVGQPAKRQAVTNPTNTVFAIKRLIGRRFEDEEVQRDIGIMPFKIVKADNGDAWVEAGGEKRAAPQISAEILKKMKKTAEDFLGEAVTEAVITVPAYFNDSQRQATKDAGRIAGLEVKRIINEPTAAALAYGMDKNRGENIVAVYDLGGGTFDLSIIEIDEVEGEHTFEVLATNGDTHLGGEDFDNRVINYLVAEFKKDQGLDLKTDPLAMQRVKEAAEKAKIELSSAQSTEVNLPYVTADATGPKHMNVKLTRAKLESLVEDLVTKSIEPLKRALADADLSVSDINDIILVGGQTRMPLVQKTVAEFFGKEPRKDVNPDEAVAVGAAIQGGVLAGDVKDVLLLDVSPLSLGIETMGSVMTALIEKNTTIPTKKSQTFSTAEDNQSAVTIHVLQGERKRSSDNKSLGQFNLEGIRPAQRGTPQIEVTFDVDADGILHVSAKDKDTGKEQKITIQASSGLSDEEVEQMIRDAEAHAEDDKKFEELVATRNQADAMVHGTRKQIEEAGDALPSEDKEAIEAAVVDLETAIKSDKKDEIEAKTQALAEKSQKLMEIAQAKAQQGSADAGEQQQSAKQDDDVVDAEFEEVKDDK</sequence>
<name>DNAK_PSET1</name>